<accession>G5EC86</accession>
<keyword id="KW-0963">Cytoplasm</keyword>
<keyword id="KW-0479">Metal-binding</keyword>
<keyword id="KW-0539">Nucleus</keyword>
<keyword id="KW-0597">Phosphoprotein</keyword>
<keyword id="KW-1185">Reference proteome</keyword>
<keyword id="KW-0677">Repeat</keyword>
<keyword id="KW-0678">Repressor</keyword>
<keyword id="KW-0687">Ribonucleoprotein</keyword>
<keyword id="KW-0694">RNA-binding</keyword>
<keyword id="KW-0810">Translation regulation</keyword>
<keyword id="KW-0862">Zinc</keyword>
<keyword id="KW-0863">Zinc-finger</keyword>
<organism evidence="19">
    <name type="scientific">Caenorhabditis elegans</name>
    <dbReference type="NCBI Taxonomy" id="6239"/>
    <lineage>
        <taxon>Eukaryota</taxon>
        <taxon>Metazoa</taxon>
        <taxon>Ecdysozoa</taxon>
        <taxon>Nematoda</taxon>
        <taxon>Chromadorea</taxon>
        <taxon>Rhabditida</taxon>
        <taxon>Rhabditina</taxon>
        <taxon>Rhabditomorpha</taxon>
        <taxon>Rhabditoidea</taxon>
        <taxon>Rhabditidae</taxon>
        <taxon>Peloderinae</taxon>
        <taxon>Caenorhabditis</taxon>
    </lineage>
</organism>
<feature type="chain" id="PRO_0000438916" description="CCCH-type zinc finger protein oma-1" evidence="18">
    <location>
        <begin position="1"/>
        <end position="407"/>
    </location>
</feature>
<feature type="zinc finger region" description="C3H1-type 1" evidence="1">
    <location>
        <begin position="112"/>
        <end position="140"/>
    </location>
</feature>
<feature type="zinc finger region" description="C3H1-type 2" evidence="1">
    <location>
        <begin position="154"/>
        <end position="182"/>
    </location>
</feature>
<feature type="region of interest" description="Disordered" evidence="2">
    <location>
        <begin position="1"/>
        <end position="39"/>
    </location>
</feature>
<feature type="region of interest" description="Required for taf-4 binding" evidence="11">
    <location>
        <begin position="46"/>
        <end position="80"/>
    </location>
</feature>
<feature type="compositionally biased region" description="Basic and acidic residues" evidence="2">
    <location>
        <begin position="7"/>
        <end position="17"/>
    </location>
</feature>
<feature type="modified residue" description="Phosphothreonine; by mbk-2 and GSK3" evidence="6 8">
    <location>
        <position position="239"/>
    </location>
</feature>
<feature type="modified residue" description="Phosphoserine; by mbk-2" evidence="6 8">
    <location>
        <position position="302"/>
    </location>
</feature>
<feature type="modified residue" description="Phosphothreonine; by GSK3" evidence="6">
    <location>
        <position position="339"/>
    </location>
</feature>
<feature type="mutagenesis site" description="In te36; sterile." evidence="3">
    <original>G</original>
    <variation>E</variation>
    <location>
        <position position="138"/>
    </location>
</feature>
<feature type="mutagenesis site" description="In te21; sterile." evidence="3">
    <original>E</original>
    <variation>K</variation>
    <location>
        <position position="141"/>
    </location>
</feature>
<feature type="mutagenesis site" description="In te22; sterile." evidence="3">
    <original>G</original>
    <variation>A</variation>
    <location>
        <position position="172"/>
    </location>
</feature>
<feature type="mutagenesis site" description="Severely reduced phosphorylation by mbk-2; when associated with A-239." evidence="8">
    <original>S</original>
    <variation>A</variation>
    <location>
        <position position="238"/>
    </location>
</feature>
<feature type="mutagenesis site" description="Reduced phosphorylation by mbk-2. Severely reduced phosphorylation by mbk-2; when associated with A-238 or A-302. Reduced phosphorylation by GSK3. Severely reduced phosphorylation by GSK3; when associated with A-339." evidence="6">
    <original>T</original>
    <variation>A</variation>
    <location>
        <position position="239"/>
    </location>
</feature>
<feature type="mutagenesis site" description="Slight reduction in phosphorylation by gsk-3." evidence="6">
    <original>T</original>
    <variation>D</variation>
    <variation>E</variation>
    <location>
        <position position="239"/>
    </location>
</feature>
<feature type="mutagenesis site" description="In zu405; gain of function mutation and maternal-effect embryonic lethal due to improper degradation of the oma-1 protein in the embryo. Reduced phosphorylation by mbk-2. Severely reduced phosphorylation by mbk-2; when associated with A-302." evidence="3 5 6 7 8">
    <original>P</original>
    <variation>L</variation>
    <location>
        <position position="240"/>
    </location>
</feature>
<feature type="mutagenesis site" description="Reduced phosphorylation by mbk-2. Severely reduced phosphorylation by mbk-2; when associated with A-239 or L-240." evidence="6 8">
    <original>S</original>
    <variation>A</variation>
    <location>
        <position position="302"/>
    </location>
</feature>
<feature type="mutagenesis site" description="Reduced phosphorylation by GSK3. Severely reduced phosphorylation by GSK3; when associated with A-239." evidence="6">
    <original>T</original>
    <variation>A</variation>
    <location>
        <position position="339"/>
    </location>
</feature>
<reference evidence="19" key="1">
    <citation type="journal article" date="1998" name="Science">
        <title>Genome sequence of the nematode C. elegans: a platform for investigating biology.</title>
        <authorList>
            <consortium name="The C. elegans sequencing consortium"/>
        </authorList>
    </citation>
    <scope>NUCLEOTIDE SEQUENCE [LARGE SCALE GENOMIC DNA]</scope>
    <source>
        <strain evidence="19">Bristol N2</strain>
    </source>
</reference>
<reference evidence="18" key="2">
    <citation type="journal article" date="2001" name="Dev. Cell">
        <title>Two zinc finger proteins, OMA-1 and OMA-2, are redundantly required for oocyte maturation in C. elegans.</title>
        <authorList>
            <person name="Detwiler M.R."/>
            <person name="Reuben M."/>
            <person name="Li X."/>
            <person name="Rogers E."/>
            <person name="Lin R."/>
        </authorList>
    </citation>
    <scope>FUNCTION</scope>
    <scope>SUBCELLULAR LOCATION</scope>
    <scope>TISSUE SPECIFICITY</scope>
    <scope>DEVELOPMENTAL STAGE</scope>
    <scope>DISRUPTION PHENOTYPE</scope>
    <scope>MUTAGENESIS OF GLY-138; GLU-141; GLY-172 AND PRO-240</scope>
</reference>
<reference evidence="18" key="3">
    <citation type="journal article" date="2002" name="Genes Cells">
        <title>Novel family of CCCH-type zinc-finger proteins, MOE-1, -2 and -3, participates in C. elegans oocyte maturation.</title>
        <authorList>
            <person name="Shimada M."/>
            <person name="Kawahara H."/>
            <person name="Doi H."/>
        </authorList>
    </citation>
    <scope>FUNCTION</scope>
    <scope>SUBCELLULAR LOCATION</scope>
    <scope>TISSUE SPECIFICITY</scope>
    <scope>DISRUPTION PHENOTYPE</scope>
</reference>
<reference evidence="18" key="4">
    <citation type="journal article" date="2003" name="Dev. Biol.">
        <title>A gain-of-function mutation in oma-1, a C. elegans gene required for oocyte maturation, results in delayed degradation of maternal proteins and embryonic lethality.</title>
        <authorList>
            <person name="Lin R."/>
        </authorList>
    </citation>
    <scope>FUNCTION</scope>
    <scope>SUBCELLULAR LOCATION</scope>
    <scope>DEVELOPMENTAL STAGE</scope>
    <scope>MUTAGENESIS OF PRO-240</scope>
</reference>
<reference evidence="18" key="5">
    <citation type="journal article" date="2005" name="Dev. Biol.">
        <title>DYRK2 and GSK-3 phosphorylate and promote the timely degradation of OMA-1, a key regulator of the oocyte-to-embryo transition in C. elegans.</title>
        <authorList>
            <person name="Nishi Y."/>
            <person name="Lin R."/>
        </authorList>
    </citation>
    <scope>FUNCTION</scope>
    <scope>SUBCELLULAR LOCATION</scope>
    <scope>PHOSPHORYLATION AT THR-239; SER-302 AND THR-339</scope>
    <scope>MUTAGENESIS OF THR-239; PRO-240; SER-302 AND THR-339</scope>
</reference>
<reference evidence="18" key="6">
    <citation type="journal article" date="2006" name="Genes Cells">
        <title>OMA-1 is a P granules-associated protein that is required for germline specification in Caenorhabditis elegans embryos.</title>
        <authorList>
            <person name="Shimada M."/>
            <person name="Yokosawa H."/>
            <person name="Kawahara H."/>
        </authorList>
    </citation>
    <scope>FUNCTION</scope>
    <scope>SUBCELLULAR LOCATION</scope>
    <scope>TISSUE SPECIFICITY</scope>
    <scope>DEVELOPMENTAL STAGE</scope>
    <scope>DISRUPTION PHENOTYPE</scope>
</reference>
<reference evidence="18" key="7">
    <citation type="journal article" date="2006" name="Curr. Biol.">
        <title>The conserved kinases CDK-1, GSK-3, KIN-19, and MBK-2 promote OMA-1 destruction to regulate the oocyte-to-embryo transition in C. elegans.</title>
        <authorList>
            <person name="Shirayama M."/>
            <person name="Soto M.C."/>
            <person name="Ishidate T."/>
            <person name="Kim S."/>
            <person name="Nakamura K."/>
            <person name="Bei Y."/>
            <person name="van den Heuvel S."/>
            <person name="Mello C.C."/>
        </authorList>
    </citation>
    <scope>FUNCTION</scope>
    <scope>PHOSPHORYLATION AT THR-239 AND SER-302</scope>
    <scope>MUTAGENESIS OF SER-238; THR-239 AND SER-302</scope>
</reference>
<reference evidence="18" key="8">
    <citation type="journal article" date="2006" name="Curr. Biol.">
        <title>The C. elegans DYRK Kinase MBK-2 marks oocyte proteins for degradation in response to meiotic maturation.</title>
        <authorList>
            <person name="Stitzel M.L."/>
            <person name="Pellettieri J."/>
            <person name="Seydoux G."/>
        </authorList>
    </citation>
    <scope>PHOSPHORYLATION</scope>
    <scope>MUTAGENESIS OF PRO-240</scope>
</reference>
<reference evidence="18" key="9">
    <citation type="journal article" date="2008" name="Cell">
        <title>Global transcriptional repression in C. elegans germline precursors by regulated sequestration of TAF-4.</title>
        <authorList>
            <person name="Guven-Ozkan T."/>
            <person name="Nishi Y."/>
            <person name="Robertson S.M."/>
            <person name="Lin R."/>
        </authorList>
    </citation>
    <scope>FUNCTION</scope>
    <scope>INTERACTION WITH TAF-4</scope>
    <scope>SUBCELLULAR LOCATION</scope>
    <scope>DEVELOPMENTAL STAGE</scope>
    <scope>DISRUPTION PHENOTYPE</scope>
</reference>
<reference evidence="18" key="10">
    <citation type="journal article" date="2008" name="Development">
        <title>Multiple maternal proteins coordinate to restrict the translation of C. elegans nanos-2 to primordial germ cells.</title>
        <authorList>
            <person name="Jadhav S."/>
            <person name="Rana M."/>
            <person name="Subramaniam K."/>
        </authorList>
    </citation>
    <scope>FUNCTION</scope>
    <scope>DEVELOPMENTAL STAGE</scope>
    <scope>DISRUPTION PHENOTYPE</scope>
</reference>
<reference evidence="18" key="11">
    <citation type="journal article" date="2009" name="J. Cell Biol.">
        <title>An eIF4E-binding protein regulates katanin protein levels in C. elegans embryos.</title>
        <authorList>
            <person name="Li W."/>
            <person name="DeBella L.R."/>
            <person name="Guven-Ozkan T."/>
            <person name="Lin R."/>
            <person name="Rose L.S."/>
        </authorList>
    </citation>
    <scope>FUNCTION</scope>
    <scope>INTERACTION WITH IFET-1</scope>
    <scope>DISRUPTION PHENOTYPE</scope>
</reference>
<reference evidence="18" key="12">
    <citation type="journal article" date="2010" name="Development">
        <title>zif-1 translational repression defines a second, mutually exclusive OMA function in germline transcriptional repression.</title>
        <authorList>
            <person name="Guven-Ozkan T."/>
            <person name="Robertson S.M."/>
            <person name="Nishi Y."/>
            <person name="Lin R."/>
        </authorList>
    </citation>
    <scope>FUNCTION</scope>
    <scope>DISRUPTION PHENOTYPE</scope>
</reference>
<reference evidence="18" key="13">
    <citation type="journal article" date="2013" name="J. Biol. Chem.">
        <title>RNA recognition by the Caenorhabditis elegans oocyte maturation determinant OMA-1.</title>
        <authorList>
            <person name="Kaymak E."/>
            <person name="Ryder S.P."/>
        </authorList>
    </citation>
    <scope>FUNCTION</scope>
</reference>
<reference evidence="18" key="14">
    <citation type="journal article" date="2014" name="Genetics">
        <title>Translational control of the oogenic program by components of OMA ribonucleoprotein particles in Caenorhabditis elegans.</title>
        <authorList>
            <person name="Spike C.A."/>
            <person name="Coetzee D."/>
            <person name="Nishi Y."/>
            <person name="Guven-Ozkan T."/>
            <person name="Oldenbroek M."/>
            <person name="Yamamoto I."/>
            <person name="Lin R."/>
            <person name="Greenstein D."/>
        </authorList>
    </citation>
    <scope>FUNCTION</scope>
    <scope>INTERACTION WITH CGH-1 AND CAR-1</scope>
    <scope>SUBCELLULAR LOCATION</scope>
    <scope>TISSUE SPECIFICITY</scope>
</reference>
<gene>
    <name evidence="16 20" type="primary">oma-1</name>
    <name evidence="17 20" type="synonym">moe-1</name>
    <name evidence="20" type="ORF">C09G9.6</name>
</gene>
<name>MOE1_CAEEL</name>
<dbReference type="EMBL" id="BX284604">
    <property type="protein sequence ID" value="CAA90977.1"/>
    <property type="molecule type" value="Genomic_DNA"/>
</dbReference>
<dbReference type="PIR" id="T19155">
    <property type="entry name" value="T19155"/>
</dbReference>
<dbReference type="RefSeq" id="NP_501542.1">
    <property type="nucleotide sequence ID" value="NM_069141.4"/>
</dbReference>
<dbReference type="FunCoup" id="G5EC86">
    <property type="interactions" value="20"/>
</dbReference>
<dbReference type="IntAct" id="G5EC86">
    <property type="interactions" value="1"/>
</dbReference>
<dbReference type="STRING" id="6239.C09G9.6.1"/>
<dbReference type="iPTMnet" id="G5EC86"/>
<dbReference type="PaxDb" id="6239-C09G9.6"/>
<dbReference type="PeptideAtlas" id="G5EC86"/>
<dbReference type="EnsemblMetazoa" id="C09G9.6.1">
    <property type="protein sequence ID" value="C09G9.6.1"/>
    <property type="gene ID" value="WBGene00003864"/>
</dbReference>
<dbReference type="GeneID" id="177703"/>
<dbReference type="KEGG" id="cel:CELE_C09G9.6"/>
<dbReference type="AGR" id="WB:WBGene00003864"/>
<dbReference type="CTD" id="177703"/>
<dbReference type="WormBase" id="C09G9.6">
    <property type="protein sequence ID" value="CE03005"/>
    <property type="gene ID" value="WBGene00003864"/>
    <property type="gene designation" value="oma-1"/>
</dbReference>
<dbReference type="eggNOG" id="KOG1677">
    <property type="taxonomic scope" value="Eukaryota"/>
</dbReference>
<dbReference type="GeneTree" id="ENSGT00970000196212"/>
<dbReference type="HOGENOM" id="CLU_062303_0_0_1"/>
<dbReference type="InParanoid" id="G5EC86"/>
<dbReference type="OMA" id="MEHHIMT"/>
<dbReference type="OrthoDB" id="410307at2759"/>
<dbReference type="PhylomeDB" id="G5EC86"/>
<dbReference type="Reactome" id="R-CEL-450385">
    <property type="pathway name" value="Butyrate Response Factor 1 (BRF1) binds and destabilizes mRNA"/>
</dbReference>
<dbReference type="Reactome" id="R-CEL-450513">
    <property type="pathway name" value="Tristetraprolin (TTP, ZFP36) binds and destabilizes mRNA"/>
</dbReference>
<dbReference type="CD-CODE" id="73A75392">
    <property type="entry name" value="P-granule"/>
</dbReference>
<dbReference type="PRO" id="PR:G5EC86"/>
<dbReference type="Proteomes" id="UP000001940">
    <property type="component" value="Chromosome IV"/>
</dbReference>
<dbReference type="Bgee" id="WBGene00003864">
    <property type="expression patterns" value="Expressed in adult organism and 4 other cell types or tissues"/>
</dbReference>
<dbReference type="GO" id="GO:0005813">
    <property type="term" value="C:centrosome"/>
    <property type="evidence" value="ECO:0000314"/>
    <property type="project" value="WormBase"/>
</dbReference>
<dbReference type="GO" id="GO:0005737">
    <property type="term" value="C:cytoplasm"/>
    <property type="evidence" value="ECO:0000314"/>
    <property type="project" value="WormBase"/>
</dbReference>
<dbReference type="GO" id="GO:0036464">
    <property type="term" value="C:cytoplasmic ribonucleoprotein granule"/>
    <property type="evidence" value="ECO:0000314"/>
    <property type="project" value="UniProtKB"/>
</dbReference>
<dbReference type="GO" id="GO:0005829">
    <property type="term" value="C:cytosol"/>
    <property type="evidence" value="ECO:0000318"/>
    <property type="project" value="GO_Central"/>
</dbReference>
<dbReference type="GO" id="GO:0005634">
    <property type="term" value="C:nucleus"/>
    <property type="evidence" value="ECO:0007669"/>
    <property type="project" value="UniProtKB-SubCell"/>
</dbReference>
<dbReference type="GO" id="GO:0043186">
    <property type="term" value="C:P granule"/>
    <property type="evidence" value="ECO:0000314"/>
    <property type="project" value="UniProtKB"/>
</dbReference>
<dbReference type="GO" id="GO:1990904">
    <property type="term" value="C:ribonucleoprotein complex"/>
    <property type="evidence" value="ECO:0007669"/>
    <property type="project" value="UniProtKB-KW"/>
</dbReference>
<dbReference type="GO" id="GO:0035770">
    <property type="term" value="C:ribonucleoprotein granule"/>
    <property type="evidence" value="ECO:0000314"/>
    <property type="project" value="WormBase"/>
</dbReference>
<dbReference type="GO" id="GO:0035925">
    <property type="term" value="F:mRNA 3'-UTR AU-rich region binding"/>
    <property type="evidence" value="ECO:0000314"/>
    <property type="project" value="UniProtKB"/>
</dbReference>
<dbReference type="GO" id="GO:0003730">
    <property type="term" value="F:mRNA 3'-UTR binding"/>
    <property type="evidence" value="ECO:0000314"/>
    <property type="project" value="WormBase"/>
</dbReference>
<dbReference type="GO" id="GO:0000900">
    <property type="term" value="F:mRNA regulatory element binding translation repressor activity"/>
    <property type="evidence" value="ECO:0000316"/>
    <property type="project" value="UniProtKB"/>
</dbReference>
<dbReference type="GO" id="GO:0008270">
    <property type="term" value="F:zinc ion binding"/>
    <property type="evidence" value="ECO:0007669"/>
    <property type="project" value="UniProtKB-KW"/>
</dbReference>
<dbReference type="GO" id="GO:0009880">
    <property type="term" value="P:embryonic pattern specification"/>
    <property type="evidence" value="ECO:0000315"/>
    <property type="project" value="UniProtKB"/>
</dbReference>
<dbReference type="GO" id="GO:0051303">
    <property type="term" value="P:establishment of chromosome localization"/>
    <property type="evidence" value="ECO:0000316"/>
    <property type="project" value="UniProtKB"/>
</dbReference>
<dbReference type="GO" id="GO:0051078">
    <property type="term" value="P:meiotic nuclear membrane disassembly"/>
    <property type="evidence" value="ECO:0000316"/>
    <property type="project" value="UniProtKB"/>
</dbReference>
<dbReference type="GO" id="GO:1904145">
    <property type="term" value="P:negative regulation of meiotic cell cycle process involved in oocyte maturation"/>
    <property type="evidence" value="ECO:0000316"/>
    <property type="project" value="UniProtKB"/>
</dbReference>
<dbReference type="GO" id="GO:0060280">
    <property type="term" value="P:negative regulation of ovulation"/>
    <property type="evidence" value="ECO:0000316"/>
    <property type="project" value="UniProtKB"/>
</dbReference>
<dbReference type="GO" id="GO:0017148">
    <property type="term" value="P:negative regulation of translation"/>
    <property type="evidence" value="ECO:0000315"/>
    <property type="project" value="WormBase"/>
</dbReference>
<dbReference type="GO" id="GO:0001555">
    <property type="term" value="P:oocyte growth"/>
    <property type="evidence" value="ECO:0000316"/>
    <property type="project" value="UniProtKB"/>
</dbReference>
<dbReference type="GO" id="GO:0001556">
    <property type="term" value="P:oocyte maturation"/>
    <property type="evidence" value="ECO:0000316"/>
    <property type="project" value="WormBase"/>
</dbReference>
<dbReference type="GO" id="GO:0048601">
    <property type="term" value="P:oocyte morphogenesis"/>
    <property type="evidence" value="ECO:0000316"/>
    <property type="project" value="UniProtKB"/>
</dbReference>
<dbReference type="GO" id="GO:0040019">
    <property type="term" value="P:positive regulation of embryonic development"/>
    <property type="evidence" value="ECO:0000316"/>
    <property type="project" value="UniProtKB"/>
</dbReference>
<dbReference type="GO" id="GO:1905516">
    <property type="term" value="P:positive regulation of fertilization"/>
    <property type="evidence" value="ECO:0000316"/>
    <property type="project" value="UniProtKB"/>
</dbReference>
<dbReference type="GO" id="GO:0043406">
    <property type="term" value="P:positive regulation of MAP kinase activity"/>
    <property type="evidence" value="ECO:0000316"/>
    <property type="project" value="UniProtKB"/>
</dbReference>
<dbReference type="GO" id="GO:1904146">
    <property type="term" value="P:positive regulation of meiotic cell cycle process involved in oocyte maturation"/>
    <property type="evidence" value="ECO:0000316"/>
    <property type="project" value="UniProtKB"/>
</dbReference>
<dbReference type="GO" id="GO:0060282">
    <property type="term" value="P:positive regulation of oocyte development"/>
    <property type="evidence" value="ECO:0000316"/>
    <property type="project" value="UniProtKB"/>
</dbReference>
<dbReference type="GO" id="GO:1900195">
    <property type="term" value="P:positive regulation of oocyte maturation"/>
    <property type="evidence" value="ECO:0000316"/>
    <property type="project" value="UniProtKB"/>
</dbReference>
<dbReference type="GO" id="GO:0071168">
    <property type="term" value="P:protein localization to chromatin"/>
    <property type="evidence" value="ECO:0000316"/>
    <property type="project" value="UniProtKB"/>
</dbReference>
<dbReference type="FunFam" id="4.10.1000.10:FF:000001">
    <property type="entry name" value="zinc finger CCCH domain-containing protein 15-like"/>
    <property type="match status" value="1"/>
</dbReference>
<dbReference type="FunFam" id="4.10.1000.10:FF:000018">
    <property type="entry name" value="Zinc finger protein"/>
    <property type="match status" value="1"/>
</dbReference>
<dbReference type="Gene3D" id="4.10.1000.10">
    <property type="entry name" value="Zinc finger, CCCH-type"/>
    <property type="match status" value="2"/>
</dbReference>
<dbReference type="InterPro" id="IPR045877">
    <property type="entry name" value="ZFP36-like"/>
</dbReference>
<dbReference type="InterPro" id="IPR000571">
    <property type="entry name" value="Znf_CCCH"/>
</dbReference>
<dbReference type="InterPro" id="IPR036855">
    <property type="entry name" value="Znf_CCCH_sf"/>
</dbReference>
<dbReference type="PANTHER" id="PTHR12547">
    <property type="entry name" value="CCCH ZINC FINGER/TIS11-RELATED"/>
    <property type="match status" value="1"/>
</dbReference>
<dbReference type="PANTHER" id="PTHR12547:SF71">
    <property type="entry name" value="CCCH-TYPE ZINC FINGER PROTEIN MOE-3-RELATED"/>
    <property type="match status" value="1"/>
</dbReference>
<dbReference type="Pfam" id="PF00642">
    <property type="entry name" value="zf-CCCH"/>
    <property type="match status" value="2"/>
</dbReference>
<dbReference type="SMART" id="SM00356">
    <property type="entry name" value="ZnF_C3H1"/>
    <property type="match status" value="2"/>
</dbReference>
<dbReference type="SUPFAM" id="SSF90229">
    <property type="entry name" value="CCCH zinc finger"/>
    <property type="match status" value="2"/>
</dbReference>
<dbReference type="PROSITE" id="PS50103">
    <property type="entry name" value="ZF_C3H1"/>
    <property type="match status" value="2"/>
</dbReference>
<comment type="function">
    <text evidence="3 4 5 6 8 9 10 11 12 13 14 15">Zinc-finger RNA-binding protein that binds to 5'-UA[AU]-3' motifs in the 3'-UTR of maternal mRNAs to suppress translation in oocytes and embryos (PubMed:18417623, PubMed:18854162, PubMed:19786575, PubMed:20826530, PubMed:24014033). Acts as a ribonucleoprotein particle component that may exert part of its function within cytoplasmic foci of unfertilized oocytes (PubMed:25261697). Acts redundantly with oma-2 to control the temporal expression and distribution of maternal proteins and thereby promote meiotic progression, oocyte maturation, fertilization and embryonic development (PubMed:11702779, PubMed:12296824, PubMed:12781695, PubMed:16289132, PubMed:16611242, PubMed:19786575, PubMed:20826530, PubMed:25261697). Recruits the translational repressor ifet-1 to the 3'-UTR of mei-1 and zif-1 to negatively regulate their translation (PubMed:19786575, PubMed:20826530). By suppressing the translation of the E3 ligase zif-1, may in turn play a role in the stabilization of zif-1 targets such as the maternal transcriptional repressor protein pie-1 (PubMed:16343905, PubMed:20826530). Following fertilization, sequesters the transcription initiation factor, taf-4, in the cytoplasm, which prevents its nuclear localization and thus allows for transcriptional suppression in early embryos, but not in oocytes (PubMed:18854162). Also, together with oma-2, is involved in P-granule distribution during embryonic development (PubMed:16611242).</text>
</comment>
<comment type="subunit">
    <text evidence="11 12 15">Interacts with taf-4 (via C-terminus) (PubMed:18854162). Interacts with ifet-1 (PubMed:19786575). Component of a ribonucleoprotein particle complex that interacts with cgh-1 and car-1 in an RNA-dependent manner (PubMed:25261697). Association with many proteins is dependent on the presence of RNA (PubMed:25261697).</text>
</comment>
<comment type="interaction">
    <interactant intactId="EBI-327483">
        <id>G5EC86</id>
    </interactant>
    <interactant intactId="EBI-2023840">
        <id>O61707</id>
        <label>taf-4</label>
    </interactant>
    <organismsDiffer>false</organismsDiffer>
    <experiments>5</experiments>
</comment>
<comment type="subcellular location">
    <subcellularLocation>
        <location evidence="3 4 5 6 9 11">Cytoplasm</location>
    </subcellularLocation>
    <subcellularLocation>
        <location evidence="4 5 9 15">Cytoplasmic granule</location>
    </subcellularLocation>
    <subcellularLocation>
        <location evidence="11">Nucleus</location>
    </subcellularLocation>
    <text evidence="4 5 6 9 11 15">Expressed in cytoplasmic P-granules in developing oocytes, and remains in P-granules following fertilization when cytoplasmic expression is abolished (PubMed:12296824, PubMed:12781695, PubMed:16611242, PubMed:25261697). When phosphorylated, increased levels in the cytoplasm of embryos after meiosis II and before anaphase of the first mitotic division (PubMed:16289132).</text>
</comment>
<comment type="tissue specificity">
    <text evidence="3 4 9 15">Exclusively expressed in the hermaphrodite gonad (PubMed:11702779, PubMed:12296824, PubMed:16611242). Expressed prior to oocyte division (PubMed:11702779). Widely distributed throughout gonadal oocytes from the mitotic stage to the developing diakinesis stage (PubMed:12296824). Expressed in sperm (PubMed:25261697).</text>
</comment>
<comment type="developmental stage">
    <text evidence="3 5 9 10 11">Expressed in newly fertilized embryos, but is rapidly degraded after initiation of the first mitotic division (PubMed:12781695, PubMed:16611242, PubMed:18417623). Highly expressed in one-cell embryos (PubMed:18854162). Expressed in P-granules in blastula-stage embryos (PubMed:16611242). Weak, if any, expression during larval stages (PubMed:11702779).</text>
</comment>
<comment type="PTM">
    <text evidence="6 7 8">Phosphorylation by mbk-2 and by gsk-3 are required for its rapid degradation following meiosis II.</text>
</comment>
<comment type="disruption phenotype">
    <text evidence="3 4 9 10 11 12 13 15">No visible phenotype (PubMed:12296824, PubMed:12781695). Double knockout with oma-2 results in sterility due to an oocyte maturation defect (PubMed:11702779). The oocyte maturation defect is due to a meiotic defect in oocytes in which the maturation process is initiated, but there is no progression beyond the prophase stage of meiosis and therefore the cell division process is not completed (PubMed:11702779). Animals also have a larger number of oocytes which are larger in size, but the oocytes cannot be fertilized and accumulate within the gonad (PubMed:11702779). Double RNAi-mediated knockdown with oma-2 in embryos results in more widely distributed P-granules compared to wild-type embryos, and an irregular distribution of germline proteins including pgl-1, mex-1 and pie-1 (PubMed:16611242). Double RNAi-mediated knockdown with oma-2 in larva at the L4 stage of development results in 93% embryonic lethality following the first mitotic cleavage in offspring (PubMed:16611242). Double RNAi-mediated knockdown with oma-2 in adults results in a 60% reduction in number of eggs laid (PubMed:12296824). These animals also have an expanded proximal gonad arm which contains larger number of proximal oocytes which in turn contain a larger number of germinal vesicles and higher expression of maternal mRNAs including nos-2 (PubMed:12296824, PubMed:18417623). Furthermore, after the diakinesis stage following meiosis I, the germinal vesicles have dispersed chromosomes and an abnormal distribution of P-granules (PubMed:12296824). Embryos also display cell division (PubMed:19786575, PubMed:20826530). In addition, there is increased expression of target transcripts such as taf-4 and mei-1 which also exhibit an altered localization in oocytes and embryos (PubMed:18854162, PubMed:19786575, PubMed:25261697). Reduced expression of the maternal transcriptional repressor protein pie-1 (PubMed:20826530). Double RNAi-mediated knockdown with moe-3 results in a 20% reduction in number of eggs laid (PubMed:12296824). Triple RNAi-mediated knockdown with oma-2 and moe-3 results in an 85% reduction in number of eggs laid (PubMed:12296824).</text>
</comment>
<protein>
    <recommendedName>
        <fullName evidence="18">CCCH-type zinc finger protein oma-1</fullName>
    </recommendedName>
    <alternativeName>
        <fullName evidence="17">Maturation oocyte expansion protein 1</fullName>
    </alternativeName>
    <alternativeName>
        <fullName evidence="16">Oocyte maturation defective protein 1</fullName>
    </alternativeName>
</protein>
<sequence length="407" mass="44500">MNVNGENNEKIDEHHLESSLAGVPTLPVSPLDHAKDLSQTNPNAQIGDLVTQTANLIAIKKQLLEDIAFNQHIQSMQVRAIQSFPQNNQVAPPFQQFDPRRRGLARMQKPESYKTVICQAWLESKTCSFADNCRFAHGEEELRPTFVEPLQNNKYKTKLCDKYTTTGLCPYGKRCLFIHPDHGPNAYIRADKLLEVSQRHALADIRDQMEQHIMTNGRIAAPPLSAIQHPLEMFARPSTPDEPAAKLPLGPTPVSTRGPRYELPTKELHDAEGAMTYPPSRWPLDPSMFALDAWNMAHRPASPLDSMVLGSAPNAGSFGMLGKQNTPGGVSGYSSAGSTPSQDLSSSSLNAASAAAAAAYFANSAVAQSLLMKSVATDPMMSCNGPFSPMPGFDQLAENMTKHLNLW</sequence>
<evidence type="ECO:0000255" key="1">
    <source>
        <dbReference type="PROSITE-ProRule" id="PRU00723"/>
    </source>
</evidence>
<evidence type="ECO:0000256" key="2">
    <source>
        <dbReference type="SAM" id="MobiDB-lite"/>
    </source>
</evidence>
<evidence type="ECO:0000269" key="3">
    <source>
    </source>
</evidence>
<evidence type="ECO:0000269" key="4">
    <source>
    </source>
</evidence>
<evidence type="ECO:0000269" key="5">
    <source>
    </source>
</evidence>
<evidence type="ECO:0000269" key="6">
    <source>
    </source>
</evidence>
<evidence type="ECO:0000269" key="7">
    <source>
    </source>
</evidence>
<evidence type="ECO:0000269" key="8">
    <source>
    </source>
</evidence>
<evidence type="ECO:0000269" key="9">
    <source>
    </source>
</evidence>
<evidence type="ECO:0000269" key="10">
    <source>
    </source>
</evidence>
<evidence type="ECO:0000269" key="11">
    <source>
    </source>
</evidence>
<evidence type="ECO:0000269" key="12">
    <source>
    </source>
</evidence>
<evidence type="ECO:0000269" key="13">
    <source>
    </source>
</evidence>
<evidence type="ECO:0000269" key="14">
    <source>
    </source>
</evidence>
<evidence type="ECO:0000269" key="15">
    <source>
    </source>
</evidence>
<evidence type="ECO:0000303" key="16">
    <source>
    </source>
</evidence>
<evidence type="ECO:0000303" key="17">
    <source>
    </source>
</evidence>
<evidence type="ECO:0000305" key="18"/>
<evidence type="ECO:0000312" key="19">
    <source>
        <dbReference type="Proteomes" id="UP000001940"/>
    </source>
</evidence>
<evidence type="ECO:0000312" key="20">
    <source>
        <dbReference type="WormBase" id="C09G9.6"/>
    </source>
</evidence>
<proteinExistence type="evidence at protein level"/>